<name>MSP2_MYCSO</name>
<gene>
    <name evidence="6" type="primary">msp2</name>
</gene>
<reference evidence="5 6" key="1">
    <citation type="journal article" date="2008" name="Appl. Microbiol. Biotechnol.">
        <title>Novel peroxidases of Marasmius scorodonius degrade beta-carotene.</title>
        <authorList>
            <person name="Scheibner M."/>
            <person name="Huelsdau B."/>
            <person name="Zelena K."/>
            <person name="Nimtz M."/>
            <person name="de Boer L."/>
            <person name="Berger R.G."/>
            <person name="Zorn H."/>
        </authorList>
    </citation>
    <scope>NUCLEOTIDE SEQUENCE [GENOMIC DNA]</scope>
    <scope>PROTEIN SEQUENCE OF 59-83; 272-279; 291-309; 316-337 AND 481-491</scope>
    <scope>FUNCTION</scope>
    <scope>COFACTOR</scope>
    <scope>SUBUNIT</scope>
    <scope>MASS SPECTROMETRY</scope>
    <source>
        <strain evidence="3">CBS 137.86</strain>
    </source>
</reference>
<proteinExistence type="evidence at protein level"/>
<sequence>MRLTYLPLFAGIAIQSASALPDFFKSSVLKPRRTNSLLINPDAQPDLPTAQQASTAAASVGLNLTDIQGDILIGMKKNKEMFFFFSIADATAFKSHLDSAILPLITSTQQLLTVATQPTTAVNLAFSQTGLNALGLASQGLGDSLFASGQFSGAESLGDPGTSNWVQAFAGTGIHGVFLLASDTIDNVNAELSQIQSILGTSITEAYRLQGEARPDDQQGHEHFGFMDGISNPAIDGFSTALPGQAVLSPGLFLLAEDGDGSSSSRPSWAKDGSLLAFRQLQQRVPEFNKFLADNAALTQGNADLLGARMMGRWKSGAPVDLAPTADDVDLANDPQRNNNFNFTHPDFTETTDQTHCPFSAHIRKTNPRSDFNPLNTANHIIRAGIPYGPEVTDAEASSNTSSTDASLERGLAFVAYQSNIGNGFAFIQQNWVDNANFFFGKTTPPGIDPIIGSNAAQNNFAPNSPRPVSGLDPTDSTTIVTLNTDFVVSRGGEYFFSPSLSAIQNTLSV</sequence>
<dbReference type="EC" id="1.11.1.-"/>
<dbReference type="EMBL" id="AM921679">
    <property type="protein sequence ID" value="CAP53935.1"/>
    <property type="molecule type" value="Genomic_DNA"/>
</dbReference>
<dbReference type="SMR" id="B0BK72"/>
<dbReference type="PeroxiBase" id="6674">
    <property type="entry name" value="MscDyPrx02"/>
</dbReference>
<dbReference type="GO" id="GO:0005829">
    <property type="term" value="C:cytosol"/>
    <property type="evidence" value="ECO:0007669"/>
    <property type="project" value="TreeGrafter"/>
</dbReference>
<dbReference type="GO" id="GO:0020037">
    <property type="term" value="F:heme binding"/>
    <property type="evidence" value="ECO:0000314"/>
    <property type="project" value="UniProtKB"/>
</dbReference>
<dbReference type="GO" id="GO:0046872">
    <property type="term" value="F:metal ion binding"/>
    <property type="evidence" value="ECO:0007669"/>
    <property type="project" value="UniProtKB-KW"/>
</dbReference>
<dbReference type="GO" id="GO:0004601">
    <property type="term" value="F:peroxidase activity"/>
    <property type="evidence" value="ECO:0000314"/>
    <property type="project" value="UniProtKB"/>
</dbReference>
<dbReference type="GO" id="GO:0016121">
    <property type="term" value="P:carotene catabolic process"/>
    <property type="evidence" value="ECO:0000314"/>
    <property type="project" value="UniProtKB"/>
</dbReference>
<dbReference type="InterPro" id="IPR011008">
    <property type="entry name" value="Dimeric_a/b-barrel"/>
</dbReference>
<dbReference type="InterPro" id="IPR049509">
    <property type="entry name" value="DyP_N"/>
</dbReference>
<dbReference type="InterPro" id="IPR048328">
    <property type="entry name" value="Dyp_perox_C"/>
</dbReference>
<dbReference type="InterPro" id="IPR006314">
    <property type="entry name" value="Dyp_peroxidase"/>
</dbReference>
<dbReference type="NCBIfam" id="TIGR01413">
    <property type="entry name" value="Dyp_perox_fam"/>
    <property type="match status" value="1"/>
</dbReference>
<dbReference type="PANTHER" id="PTHR30521:SF4">
    <property type="entry name" value="DEFERROCHELATASE"/>
    <property type="match status" value="1"/>
</dbReference>
<dbReference type="PANTHER" id="PTHR30521">
    <property type="entry name" value="DEFERROCHELATASE/PEROXIDASE"/>
    <property type="match status" value="1"/>
</dbReference>
<dbReference type="Pfam" id="PF21105">
    <property type="entry name" value="DyP_N"/>
    <property type="match status" value="1"/>
</dbReference>
<dbReference type="Pfam" id="PF20628">
    <property type="entry name" value="Dyp_perox_C"/>
    <property type="match status" value="1"/>
</dbReference>
<dbReference type="SUPFAM" id="SSF54909">
    <property type="entry name" value="Dimeric alpha+beta barrel"/>
    <property type="match status" value="1"/>
</dbReference>
<dbReference type="PROSITE" id="PS51404">
    <property type="entry name" value="DYP_PEROXIDASE"/>
    <property type="match status" value="1"/>
</dbReference>
<evidence type="ECO:0000250" key="1"/>
<evidence type="ECO:0000255" key="2"/>
<evidence type="ECO:0000269" key="3">
    <source>
    </source>
</evidence>
<evidence type="ECO:0000303" key="4">
    <source>
    </source>
</evidence>
<evidence type="ECO:0000305" key="5"/>
<evidence type="ECO:0000312" key="6">
    <source>
        <dbReference type="EMBL" id="CAP53935.1"/>
    </source>
</evidence>
<protein>
    <recommendedName>
        <fullName evidence="4">Peroxidase 2</fullName>
        <shortName evidence="4">MsP2</shortName>
        <ecNumber>1.11.1.-</ecNumber>
    </recommendedName>
</protein>
<organism>
    <name type="scientific">Mycetinis scorodonius</name>
    <name type="common">Garlic mushroom</name>
    <name type="synonym">Marasmius scorodonius</name>
    <dbReference type="NCBI Taxonomy" id="182058"/>
    <lineage>
        <taxon>Eukaryota</taxon>
        <taxon>Fungi</taxon>
        <taxon>Dikarya</taxon>
        <taxon>Basidiomycota</taxon>
        <taxon>Agaricomycotina</taxon>
        <taxon>Agaricomycetes</taxon>
        <taxon>Agaricomycetidae</taxon>
        <taxon>Agaricales</taxon>
        <taxon>Marasmiineae</taxon>
        <taxon>Omphalotaceae</taxon>
        <taxon>Mycetinis</taxon>
    </lineage>
</organism>
<comment type="function">
    <text evidence="3">Peroxidase capable of degrading beta-carotene.</text>
</comment>
<comment type="cofactor">
    <cofactor evidence="2 3">
        <name>heme b</name>
        <dbReference type="ChEBI" id="CHEBI:60344"/>
    </cofactor>
    <text evidence="2 3">Binds 1 heme b (iron(II)-protoporphyrin IX) group non-covalently per monomer.</text>
</comment>
<comment type="subunit">
    <text evidence="3">Homodimer.</text>
</comment>
<comment type="mass spectrometry"/>
<comment type="similarity">
    <text evidence="2">Belongs to the DyP-type peroxidase family.</text>
</comment>
<accession>B0BK72</accession>
<keyword id="KW-0903">Direct protein sequencing</keyword>
<keyword id="KW-0349">Heme</keyword>
<keyword id="KW-0408">Iron</keyword>
<keyword id="KW-0479">Metal-binding</keyword>
<keyword id="KW-0560">Oxidoreductase</keyword>
<keyword id="KW-0575">Peroxidase</keyword>
<keyword id="KW-0732">Signal</keyword>
<feature type="signal peptide" evidence="2">
    <location>
        <begin position="1"/>
        <end position="19"/>
    </location>
</feature>
<feature type="propeptide" id="PRO_0000386439" evidence="2 3">
    <location>
        <begin position="20"/>
        <end position="58"/>
    </location>
</feature>
<feature type="chain" id="PRO_0000386440" description="Peroxidase 2" evidence="3">
    <location>
        <begin position="59"/>
        <end position="510"/>
    </location>
</feature>
<feature type="active site" description="Proton acceptor" evidence="1">
    <location>
        <position position="228"/>
    </location>
</feature>
<feature type="binding site" description="proximal binding residue" evidence="1">
    <location>
        <position position="362"/>
    </location>
    <ligand>
        <name>heme</name>
        <dbReference type="ChEBI" id="CHEBI:30413"/>
    </ligand>
    <ligandPart>
        <name>Fe</name>
        <dbReference type="ChEBI" id="CHEBI:18248"/>
    </ligandPart>
</feature>
<feature type="sequence conflict" description="In Ref. 1; AA sequence." evidence="5" ref="1">
    <location>
        <position position="59"/>
    </location>
</feature>
<feature type="sequence conflict" description="In Ref. 1; AA sequence." evidence="5" ref="1">
    <original>L</original>
    <variation>F</variation>
    <location>
        <position position="275"/>
    </location>
</feature>
<feature type="sequence conflict" description="In Ref. 1; AA sequence." evidence="5" ref="1">
    <original>VT</original>
    <variation>LV</variation>
    <location>
        <begin position="481"/>
        <end position="482"/>
    </location>
</feature>
<feature type="sequence conflict" description="In Ref. 1; AA sequence." evidence="5" ref="1">
    <original>V</original>
    <variation>S</variation>
    <location>
        <position position="489"/>
    </location>
</feature>